<comment type="function">
    <text evidence="1">Hydrolyzes ribosome-free peptidyl-tRNAs (with 1 or more amino acids incorporated), which drop off the ribosome during protein synthesis, or as a result of ribosome stalling.</text>
</comment>
<comment type="function">
    <text evidence="1">Catalyzes the release of premature peptidyl moieties from peptidyl-tRNA molecules trapped in stalled 50S ribosomal subunits, and thus maintains levels of free tRNAs and 50S ribosomes.</text>
</comment>
<comment type="catalytic activity">
    <reaction evidence="1">
        <text>an N-acyl-L-alpha-aminoacyl-tRNA + H2O = an N-acyl-L-amino acid + a tRNA + H(+)</text>
        <dbReference type="Rhea" id="RHEA:54448"/>
        <dbReference type="Rhea" id="RHEA-COMP:10123"/>
        <dbReference type="Rhea" id="RHEA-COMP:13883"/>
        <dbReference type="ChEBI" id="CHEBI:15377"/>
        <dbReference type="ChEBI" id="CHEBI:15378"/>
        <dbReference type="ChEBI" id="CHEBI:59874"/>
        <dbReference type="ChEBI" id="CHEBI:78442"/>
        <dbReference type="ChEBI" id="CHEBI:138191"/>
        <dbReference type="EC" id="3.1.1.29"/>
    </reaction>
</comment>
<comment type="subunit">
    <text evidence="1">Monomer.</text>
</comment>
<comment type="subcellular location">
    <subcellularLocation>
        <location evidence="1">Cytoplasm</location>
    </subcellularLocation>
</comment>
<comment type="similarity">
    <text evidence="1">Belongs to the PTH family.</text>
</comment>
<organism>
    <name type="scientific">Rickettsia peacockii (strain Rustic)</name>
    <dbReference type="NCBI Taxonomy" id="562019"/>
    <lineage>
        <taxon>Bacteria</taxon>
        <taxon>Pseudomonadati</taxon>
        <taxon>Pseudomonadota</taxon>
        <taxon>Alphaproteobacteria</taxon>
        <taxon>Rickettsiales</taxon>
        <taxon>Rickettsiaceae</taxon>
        <taxon>Rickettsieae</taxon>
        <taxon>Rickettsia</taxon>
        <taxon>spotted fever group</taxon>
    </lineage>
</organism>
<reference key="1">
    <citation type="journal article" date="2009" name="PLoS ONE">
        <title>Genome sequence of the endosymbiont Rickettsia peacockii and comparison with virulent Rickettsia rickettsii: identification of virulence factors.</title>
        <authorList>
            <person name="Felsheim R.F."/>
            <person name="Kurtti T.J."/>
            <person name="Munderloh U.G."/>
        </authorList>
    </citation>
    <scope>NUCLEOTIDE SEQUENCE [LARGE SCALE GENOMIC DNA]</scope>
    <source>
        <strain>Rustic</strain>
    </source>
</reference>
<dbReference type="EC" id="3.1.1.29" evidence="1"/>
<dbReference type="EMBL" id="CP001227">
    <property type="protein sequence ID" value="ACR47465.1"/>
    <property type="molecule type" value="Genomic_DNA"/>
</dbReference>
<dbReference type="RefSeq" id="WP_012736702.1">
    <property type="nucleotide sequence ID" value="NC_012730.1"/>
</dbReference>
<dbReference type="SMR" id="C4K1L4"/>
<dbReference type="KEGG" id="rpk:RPR_03655"/>
<dbReference type="HOGENOM" id="CLU_062456_2_2_5"/>
<dbReference type="Proteomes" id="UP000005015">
    <property type="component" value="Chromosome"/>
</dbReference>
<dbReference type="GO" id="GO:0005737">
    <property type="term" value="C:cytoplasm"/>
    <property type="evidence" value="ECO:0007669"/>
    <property type="project" value="UniProtKB-SubCell"/>
</dbReference>
<dbReference type="GO" id="GO:0004045">
    <property type="term" value="F:peptidyl-tRNA hydrolase activity"/>
    <property type="evidence" value="ECO:0007669"/>
    <property type="project" value="UniProtKB-UniRule"/>
</dbReference>
<dbReference type="GO" id="GO:0000049">
    <property type="term" value="F:tRNA binding"/>
    <property type="evidence" value="ECO:0007669"/>
    <property type="project" value="UniProtKB-UniRule"/>
</dbReference>
<dbReference type="GO" id="GO:0006515">
    <property type="term" value="P:protein quality control for misfolded or incompletely synthesized proteins"/>
    <property type="evidence" value="ECO:0007669"/>
    <property type="project" value="UniProtKB-UniRule"/>
</dbReference>
<dbReference type="GO" id="GO:0072344">
    <property type="term" value="P:rescue of stalled ribosome"/>
    <property type="evidence" value="ECO:0007669"/>
    <property type="project" value="UniProtKB-UniRule"/>
</dbReference>
<dbReference type="CDD" id="cd00462">
    <property type="entry name" value="PTH"/>
    <property type="match status" value="1"/>
</dbReference>
<dbReference type="FunFam" id="3.40.50.1470:FF:000001">
    <property type="entry name" value="Peptidyl-tRNA hydrolase"/>
    <property type="match status" value="1"/>
</dbReference>
<dbReference type="Gene3D" id="3.40.50.1470">
    <property type="entry name" value="Peptidyl-tRNA hydrolase"/>
    <property type="match status" value="1"/>
</dbReference>
<dbReference type="HAMAP" id="MF_00083">
    <property type="entry name" value="Pept_tRNA_hydro_bact"/>
    <property type="match status" value="1"/>
</dbReference>
<dbReference type="InterPro" id="IPR001328">
    <property type="entry name" value="Pept_tRNA_hydro"/>
</dbReference>
<dbReference type="InterPro" id="IPR018171">
    <property type="entry name" value="Pept_tRNA_hydro_CS"/>
</dbReference>
<dbReference type="InterPro" id="IPR036416">
    <property type="entry name" value="Pept_tRNA_hydro_sf"/>
</dbReference>
<dbReference type="NCBIfam" id="TIGR00447">
    <property type="entry name" value="pth"/>
    <property type="match status" value="1"/>
</dbReference>
<dbReference type="PANTHER" id="PTHR17224">
    <property type="entry name" value="PEPTIDYL-TRNA HYDROLASE"/>
    <property type="match status" value="1"/>
</dbReference>
<dbReference type="PANTHER" id="PTHR17224:SF1">
    <property type="entry name" value="PEPTIDYL-TRNA HYDROLASE"/>
    <property type="match status" value="1"/>
</dbReference>
<dbReference type="Pfam" id="PF01195">
    <property type="entry name" value="Pept_tRNA_hydro"/>
    <property type="match status" value="1"/>
</dbReference>
<dbReference type="SUPFAM" id="SSF53178">
    <property type="entry name" value="Peptidyl-tRNA hydrolase-like"/>
    <property type="match status" value="1"/>
</dbReference>
<dbReference type="PROSITE" id="PS01195">
    <property type="entry name" value="PEPT_TRNA_HYDROL_1"/>
    <property type="match status" value="1"/>
</dbReference>
<dbReference type="PROSITE" id="PS01196">
    <property type="entry name" value="PEPT_TRNA_HYDROL_2"/>
    <property type="match status" value="1"/>
</dbReference>
<keyword id="KW-0963">Cytoplasm</keyword>
<keyword id="KW-0378">Hydrolase</keyword>
<keyword id="KW-0694">RNA-binding</keyword>
<keyword id="KW-0820">tRNA-binding</keyword>
<accession>C4K1L4</accession>
<evidence type="ECO:0000255" key="1">
    <source>
        <dbReference type="HAMAP-Rule" id="MF_00083"/>
    </source>
</evidence>
<gene>
    <name evidence="1" type="primary">pth</name>
    <name type="ordered locus">RPR_03655</name>
</gene>
<proteinExistence type="inferred from homology"/>
<name>PTH_RICPU</name>
<feature type="chain" id="PRO_1000202597" description="Peptidyl-tRNA hydrolase">
    <location>
        <begin position="1"/>
        <end position="182"/>
    </location>
</feature>
<feature type="active site" description="Proton acceptor" evidence="1">
    <location>
        <position position="19"/>
    </location>
</feature>
<feature type="binding site" evidence="1">
    <location>
        <position position="14"/>
    </location>
    <ligand>
        <name>tRNA</name>
        <dbReference type="ChEBI" id="CHEBI:17843"/>
    </ligand>
</feature>
<feature type="binding site" evidence="1">
    <location>
        <position position="65"/>
    </location>
    <ligand>
        <name>tRNA</name>
        <dbReference type="ChEBI" id="CHEBI:17843"/>
    </ligand>
</feature>
<feature type="binding site" evidence="1">
    <location>
        <position position="67"/>
    </location>
    <ligand>
        <name>tRNA</name>
        <dbReference type="ChEBI" id="CHEBI:17843"/>
    </ligand>
</feature>
<feature type="binding site" evidence="1">
    <location>
        <position position="113"/>
    </location>
    <ligand>
        <name>tRNA</name>
        <dbReference type="ChEBI" id="CHEBI:17843"/>
    </ligand>
</feature>
<feature type="site" description="Discriminates between blocked and unblocked aminoacyl-tRNA" evidence="1">
    <location>
        <position position="9"/>
    </location>
</feature>
<feature type="site" description="Stabilizes the basic form of H active site to accept a proton" evidence="1">
    <location>
        <position position="92"/>
    </location>
</feature>
<sequence length="182" mass="20574">MLLVIGLGNPGKEYQYTRHNVGFIAIEKIANQYNSSFSTKKKFNCEIAETISDRQKIIFIKPTTYMNLSGKSVISVKTYYNIYPAKIFVIHDDIDLETGRIKFKTGGGNGGHNGLKSIDGVIGNNYNRIRIGVGRPQNNQDVADYVLNHFSKPEYKTVMQAIDRITSNFGLILENKLEEFKN</sequence>
<protein>
    <recommendedName>
        <fullName evidence="1">Peptidyl-tRNA hydrolase</fullName>
        <shortName evidence="1">Pth</shortName>
        <ecNumber evidence="1">3.1.1.29</ecNumber>
    </recommendedName>
</protein>